<name>YL208_MIMIV</name>
<gene>
    <name type="ordered locus">MIMI_L208</name>
</gene>
<accession>Q5UQ21</accession>
<evidence type="ECO:0000269" key="1">
    <source>
    </source>
</evidence>
<keyword id="KW-1185">Reference proteome</keyword>
<keyword id="KW-0946">Virion</keyword>
<dbReference type="EMBL" id="AY653733">
    <property type="protein sequence ID" value="AAV50481.1"/>
    <property type="molecule type" value="Genomic_DNA"/>
</dbReference>
<dbReference type="KEGG" id="vg:9924815"/>
<dbReference type="OrthoDB" id="14598at10239"/>
<dbReference type="Proteomes" id="UP000001134">
    <property type="component" value="Genome"/>
</dbReference>
<dbReference type="GO" id="GO:0044423">
    <property type="term" value="C:virion component"/>
    <property type="evidence" value="ECO:0007669"/>
    <property type="project" value="UniProtKB-KW"/>
</dbReference>
<reference key="1">
    <citation type="journal article" date="2004" name="Science">
        <title>The 1.2-megabase genome sequence of Mimivirus.</title>
        <authorList>
            <person name="Raoult D."/>
            <person name="Audic S."/>
            <person name="Robert C."/>
            <person name="Abergel C."/>
            <person name="Renesto P."/>
            <person name="Ogata H."/>
            <person name="La Scola B."/>
            <person name="Susan M."/>
            <person name="Claverie J.-M."/>
        </authorList>
    </citation>
    <scope>NUCLEOTIDE SEQUENCE [LARGE SCALE GENOMIC DNA]</scope>
    <source>
        <strain>Rowbotham-Bradford</strain>
    </source>
</reference>
<reference key="2">
    <citation type="journal article" date="2006" name="J. Virol.">
        <title>Mimivirus giant particles incorporate a large fraction of anonymous and unique gene products.</title>
        <authorList>
            <person name="Renesto P."/>
            <person name="Abergel C."/>
            <person name="Decloquement P."/>
            <person name="Moinier D."/>
            <person name="Azza S."/>
            <person name="Ogata H."/>
            <person name="Fourquet P."/>
            <person name="Gorvel J.-P."/>
            <person name="Claverie J.-M."/>
            <person name="Raoult D."/>
        </authorList>
    </citation>
    <scope>IDENTIFICATION BY MASS SPECTROMETRY [LARGE SCALE ANALYSIS]</scope>
    <scope>SUBCELLULAR LOCATION</scope>
</reference>
<feature type="chain" id="PRO_0000247250" description="Uncharacterized protein L208">
    <location>
        <begin position="1"/>
        <end position="192"/>
    </location>
</feature>
<organism>
    <name type="scientific">Acanthamoeba polyphaga mimivirus</name>
    <name type="common">APMV</name>
    <dbReference type="NCBI Taxonomy" id="212035"/>
    <lineage>
        <taxon>Viruses</taxon>
        <taxon>Varidnaviria</taxon>
        <taxon>Bamfordvirae</taxon>
        <taxon>Nucleocytoviricota</taxon>
        <taxon>Megaviricetes</taxon>
        <taxon>Imitervirales</taxon>
        <taxon>Mimiviridae</taxon>
        <taxon>Megamimivirinae</taxon>
        <taxon>Mimivirus</taxon>
        <taxon>Mimivirus bradfordmassiliense</taxon>
    </lineage>
</organism>
<protein>
    <recommendedName>
        <fullName>Uncharacterized protein L208</fullName>
    </recommendedName>
</protein>
<comment type="subcellular location">
    <subcellularLocation>
        <location evidence="1">Virion</location>
    </subcellularLocation>
</comment>
<proteinExistence type="evidence at protein level"/>
<sequence>MIFCEKCRYSFNITKDVKSVQVGGKVNIALNNLFGKFNKNQQIVESDLTKLKVTDVLYDERFENMTKKDKKKMMSLIKSVNKSFFQEVGGQGELNTNKAYFICKYCKNYRPIEAGTTIYTKNYDTTDNSDIENYSFYIHDHTLQRTKNYICKNKDCKTHQNDNLKEAVLAKNSADQLVYVCTACTTHWINSI</sequence>
<organismHost>
    <name type="scientific">Acanthamoeba polyphaga</name>
    <name type="common">Amoeba</name>
    <dbReference type="NCBI Taxonomy" id="5757"/>
</organismHost>